<dbReference type="EMBL" id="AB014465">
    <property type="protein sequence ID" value="BAA88760.1"/>
    <property type="molecule type" value="mRNA"/>
</dbReference>
<dbReference type="EMBL" id="AC009755">
    <property type="protein sequence ID" value="AAF02122.1"/>
    <property type="molecule type" value="Genomic_DNA"/>
</dbReference>
<dbReference type="EMBL" id="AC011664">
    <property type="protein sequence ID" value="AAF14823.1"/>
    <property type="molecule type" value="Genomic_DNA"/>
</dbReference>
<dbReference type="EMBL" id="CP002686">
    <property type="protein sequence ID" value="AEE73769.1"/>
    <property type="molecule type" value="Genomic_DNA"/>
</dbReference>
<dbReference type="EMBL" id="CP002686">
    <property type="protein sequence ID" value="AEE73770.1"/>
    <property type="molecule type" value="Genomic_DNA"/>
</dbReference>
<dbReference type="EMBL" id="BT001982">
    <property type="protein sequence ID" value="AAN71993.1"/>
    <property type="molecule type" value="mRNA"/>
</dbReference>
<dbReference type="EMBL" id="BT008839">
    <property type="protein sequence ID" value="AAP68278.1"/>
    <property type="molecule type" value="mRNA"/>
</dbReference>
<dbReference type="EMBL" id="AY085519">
    <property type="protein sequence ID" value="AAM62743.1"/>
    <property type="molecule type" value="mRNA"/>
</dbReference>
<dbReference type="RefSeq" id="NP_566164.1">
    <molecule id="Q9S7W5-2"/>
    <property type="nucleotide sequence ID" value="NM_111082.4"/>
</dbReference>
<dbReference type="RefSeq" id="NP_850501.1">
    <molecule id="Q9S7W5-1"/>
    <property type="nucleotide sequence ID" value="NM_180170.3"/>
</dbReference>
<dbReference type="SMR" id="Q9S7W5"/>
<dbReference type="BioGRID" id="6394">
    <property type="interactions" value="239"/>
</dbReference>
<dbReference type="FunCoup" id="Q9S7W5">
    <property type="interactions" value="22"/>
</dbReference>
<dbReference type="IntAct" id="Q9S7W5">
    <property type="interactions" value="244"/>
</dbReference>
<dbReference type="STRING" id="3702.Q9S7W5"/>
<dbReference type="PaxDb" id="3702-AT3G02150.2"/>
<dbReference type="ProteomicsDB" id="234199">
    <molecule id="Q9S7W5-1"/>
</dbReference>
<dbReference type="DNASU" id="821061"/>
<dbReference type="EnsemblPlants" id="AT3G02150.1">
    <molecule id="Q9S7W5-2"/>
    <property type="protein sequence ID" value="AT3G02150.1"/>
    <property type="gene ID" value="AT3G02150"/>
</dbReference>
<dbReference type="EnsemblPlants" id="AT3G02150.2">
    <molecule id="Q9S7W5-1"/>
    <property type="protein sequence ID" value="AT3G02150.2"/>
    <property type="gene ID" value="AT3G02150"/>
</dbReference>
<dbReference type="GeneID" id="821061"/>
<dbReference type="Gramene" id="AT3G02150.1">
    <molecule id="Q9S7W5-2"/>
    <property type="protein sequence ID" value="AT3G02150.1"/>
    <property type="gene ID" value="AT3G02150"/>
</dbReference>
<dbReference type="Gramene" id="AT3G02150.2">
    <molecule id="Q9S7W5-1"/>
    <property type="protein sequence ID" value="AT3G02150.2"/>
    <property type="gene ID" value="AT3G02150"/>
</dbReference>
<dbReference type="KEGG" id="ath:AT3G02150"/>
<dbReference type="Araport" id="AT3G02150"/>
<dbReference type="TAIR" id="AT3G02150">
    <property type="gene designation" value="PTF1"/>
</dbReference>
<dbReference type="eggNOG" id="ENOG502QS1Y">
    <property type="taxonomic scope" value="Eukaryota"/>
</dbReference>
<dbReference type="HOGENOM" id="CLU_059680_0_0_1"/>
<dbReference type="InParanoid" id="Q9S7W5"/>
<dbReference type="OMA" id="VMNTGPW"/>
<dbReference type="OrthoDB" id="1889307at2759"/>
<dbReference type="PhylomeDB" id="Q9S7W5"/>
<dbReference type="PRO" id="PR:Q9S7W5"/>
<dbReference type="Proteomes" id="UP000006548">
    <property type="component" value="Chromosome 3"/>
</dbReference>
<dbReference type="ExpressionAtlas" id="Q9S7W5">
    <property type="expression patterns" value="baseline and differential"/>
</dbReference>
<dbReference type="GO" id="GO:0009507">
    <property type="term" value="C:chloroplast"/>
    <property type="evidence" value="ECO:0000314"/>
    <property type="project" value="TAIR"/>
</dbReference>
<dbReference type="GO" id="GO:0005634">
    <property type="term" value="C:nucleus"/>
    <property type="evidence" value="ECO:0007669"/>
    <property type="project" value="UniProtKB-SubCell"/>
</dbReference>
<dbReference type="GO" id="GO:0003677">
    <property type="term" value="F:DNA binding"/>
    <property type="evidence" value="ECO:0007669"/>
    <property type="project" value="UniProtKB-KW"/>
</dbReference>
<dbReference type="GO" id="GO:0003700">
    <property type="term" value="F:DNA-binding transcription factor activity"/>
    <property type="evidence" value="ECO:0000250"/>
    <property type="project" value="TAIR"/>
</dbReference>
<dbReference type="GO" id="GO:0048366">
    <property type="term" value="P:leaf development"/>
    <property type="evidence" value="ECO:0000316"/>
    <property type="project" value="TAIR"/>
</dbReference>
<dbReference type="GO" id="GO:0010150">
    <property type="term" value="P:leaf senescence"/>
    <property type="evidence" value="ECO:0000316"/>
    <property type="project" value="TAIR"/>
</dbReference>
<dbReference type="GO" id="GO:0031347">
    <property type="term" value="P:regulation of defense response"/>
    <property type="evidence" value="ECO:0000315"/>
    <property type="project" value="TAIR"/>
</dbReference>
<dbReference type="GO" id="GO:0006355">
    <property type="term" value="P:regulation of DNA-templated transcription"/>
    <property type="evidence" value="ECO:0000304"/>
    <property type="project" value="TAIR"/>
</dbReference>
<dbReference type="InterPro" id="IPR017887">
    <property type="entry name" value="TF_TCP_subgr"/>
</dbReference>
<dbReference type="InterPro" id="IPR005333">
    <property type="entry name" value="Transcription_factor_TCP"/>
</dbReference>
<dbReference type="PANTHER" id="PTHR31072:SF147">
    <property type="entry name" value="TRANSCRIPTION FACTOR TCP13"/>
    <property type="match status" value="1"/>
</dbReference>
<dbReference type="PANTHER" id="PTHR31072">
    <property type="entry name" value="TRANSCRIPTION FACTOR TCP4-RELATED"/>
    <property type="match status" value="1"/>
</dbReference>
<dbReference type="Pfam" id="PF03634">
    <property type="entry name" value="TCP"/>
    <property type="match status" value="1"/>
</dbReference>
<dbReference type="PROSITE" id="PS51369">
    <property type="entry name" value="TCP"/>
    <property type="match status" value="1"/>
</dbReference>
<gene>
    <name type="primary">TCP13</name>
    <name type="synonym">PTF1</name>
    <name type="ordered locus">At3g02150</name>
    <name type="ORF">F14P3.20</name>
    <name type="ORF">F1C9.6</name>
</gene>
<sequence length="355" mass="39610">MNIVSWKDANDEVAGGATTRREREVKEDQEETEVRATSGKTVIKKQPTSISSSSSSWMKSKDPRIVRVSRAFGGKDRHSKVCTLRGLRDRRVRLSVPTAIQLYDLQERLGVDQPSKAVDWLLDAAKEEIDELPPLPISPENFSIFNHHQSFLNLGQRPGQDPTQLGFKINGCVQKSTTTSREENDREKGENDVVYTNNHHVGSYGTYHNLEHHHHHHQHLSLQADYHSHQLHSLVPFPSQILVCPMTTSPTTTTIQSLFPSSSSAGSGTMETLDPRQMVSHFQMPLMGNSSSSSSQNISTLYSLLHGSSSNNGGRDIDNRMSSVQFNRTNSTTTANMSRHLGSERCTSRGSDHHM</sequence>
<evidence type="ECO:0000255" key="1">
    <source>
        <dbReference type="PROSITE-ProRule" id="PRU00701"/>
    </source>
</evidence>
<evidence type="ECO:0000256" key="2">
    <source>
        <dbReference type="SAM" id="MobiDB-lite"/>
    </source>
</evidence>
<evidence type="ECO:0000269" key="3">
    <source>
    </source>
</evidence>
<evidence type="ECO:0000269" key="4">
    <source>
    </source>
</evidence>
<evidence type="ECO:0000269" key="5">
    <source>
    </source>
</evidence>
<evidence type="ECO:0000269" key="6">
    <source>
    </source>
</evidence>
<evidence type="ECO:0000269" key="7">
    <source>
    </source>
</evidence>
<evidence type="ECO:0000269" key="8">
    <source ref="11"/>
</evidence>
<evidence type="ECO:0000303" key="9">
    <source ref="5"/>
</evidence>
<name>TCP13_ARATH</name>
<comment type="function">
    <text evidence="3 4 6">Plays a pivotal role in the control of morphogenesis of shoot organs by negatively regulating the expression of boundary-specific genes such as CUC genes, probably through the induction of miRNA (e.g. miR164). Binds to the 3'-ACC-5' repeats in the light-responsive promoter (LRP) of psbD, and activates its transcription. Participates in ovule development (PubMed:25378179).</text>
</comment>
<comment type="subunit">
    <text evidence="5 6 7 8">Interacts with AHL27 and AHL29 (PubMed:24218605). Interacts with SPL (PubMed:25378179, PubMed:25527103). Interacts with KIN10; KIN11 and FLZ3 (Ref.11).</text>
</comment>
<comment type="interaction">
    <interactant intactId="EBI-4424877">
        <id>Q9S7W5</id>
    </interactant>
    <interactant intactId="EBI-979206">
        <id>Q9SFD5</id>
        <label>ADA2A</label>
    </interactant>
    <organismsDiffer>false</organismsDiffer>
    <experiments>4</experiments>
</comment>
<comment type="interaction">
    <interactant intactId="EBI-4424877">
        <id>Q9S7W5</id>
    </interactant>
    <interactant intactId="EBI-4458988">
        <id>Q9FGW7</id>
        <label>AITR6</label>
    </interactant>
    <organismsDiffer>false</organismsDiffer>
    <experiments>3</experiments>
</comment>
<comment type="interaction">
    <interactant intactId="EBI-4424877">
        <id>Q9S7W5</id>
    </interactant>
    <interactant intactId="EBI-2430550">
        <id>Q9LNV5</id>
        <label>At1g07360</label>
    </interactant>
    <organismsDiffer>false</organismsDiffer>
    <experiments>3</experiments>
</comment>
<comment type="interaction">
    <interactant intactId="EBI-4424877">
        <id>Q9S7W5</id>
    </interactant>
    <interactant intactId="EBI-15197415">
        <id>Q56XU4</id>
        <label>At1g19860</label>
    </interactant>
    <organismsDiffer>false</organismsDiffer>
    <experiments>3</experiments>
</comment>
<comment type="interaction">
    <interactant intactId="EBI-4424877">
        <id>Q9S7W5</id>
    </interactant>
    <interactant intactId="EBI-15192249">
        <id>C0SUZ3</id>
        <label>At1g35490</label>
    </interactant>
    <organismsDiffer>false</organismsDiffer>
    <experiments>3</experiments>
</comment>
<comment type="interaction">
    <interactant intactId="EBI-4424877">
        <id>Q9S7W5</id>
    </interactant>
    <interactant intactId="EBI-15195245">
        <id>Q9ZW36</id>
        <label>At2g29580</label>
    </interactant>
    <organismsDiffer>false</organismsDiffer>
    <experiments>3</experiments>
</comment>
<comment type="interaction">
    <interactant intactId="EBI-4424877">
        <id>Q9S7W5</id>
    </interactant>
    <interactant intactId="EBI-1536772">
        <id>O04292</id>
        <label>ATHB-9</label>
    </interactant>
    <organismsDiffer>false</organismsDiffer>
    <experiments>3</experiments>
</comment>
<comment type="interaction">
    <interactant intactId="EBI-4424877">
        <id>Q9S7W5</id>
    </interactant>
    <interactant intactId="EBI-4427748">
        <id>Q7XJU2</id>
        <label>BHLH153</label>
    </interactant>
    <organismsDiffer>false</organismsDiffer>
    <experiments>3</experiments>
</comment>
<comment type="interaction">
    <interactant intactId="EBI-4424877">
        <id>Q9S7W5</id>
    </interactant>
    <interactant intactId="EBI-943044">
        <id>Q8RU59</id>
        <label>BZIP48</label>
    </interactant>
    <organismsDiffer>false</organismsDiffer>
    <experiments>3</experiments>
</comment>
<comment type="interaction">
    <interactant intactId="EBI-4424877">
        <id>Q9S7W5</id>
    </interactant>
    <interactant intactId="EBI-1803261">
        <id>Q8S307</id>
        <label>BZR1</label>
    </interactant>
    <organismsDiffer>false</organismsDiffer>
    <experiments>4</experiments>
</comment>
<comment type="interaction">
    <interactant intactId="EBI-4424877">
        <id>Q9S7W5</id>
    </interactant>
    <interactant intactId="EBI-962511">
        <id>A9LNK9</id>
        <label>CPSF30</label>
    </interactant>
    <organismsDiffer>false</organismsDiffer>
    <experiments>3</experiments>
</comment>
<comment type="interaction">
    <interactant intactId="EBI-4424877">
        <id>Q9S7W5</id>
    </interactant>
    <interactant intactId="EBI-1390454">
        <id>Q9SU72</id>
        <label>EDS1</label>
    </interactant>
    <organismsDiffer>false</organismsDiffer>
    <experiments>3</experiments>
</comment>
<comment type="interaction">
    <interactant intactId="EBI-4424877">
        <id>Q9S7W5</id>
    </interactant>
    <interactant intactId="EBI-4446727">
        <id>Q94ID6</id>
        <label>ERF12</label>
    </interactant>
    <organismsDiffer>false</organismsDiffer>
    <experiments>5</experiments>
</comment>
<comment type="interaction">
    <interactant intactId="EBI-4424877">
        <id>Q9S7W5</id>
    </interactant>
    <interactant intactId="EBI-966009">
        <id>O80340</id>
        <label>ERF4</label>
    </interactant>
    <organismsDiffer>false</organismsDiffer>
    <experiments>5</experiments>
</comment>
<comment type="interaction">
    <interactant intactId="EBI-4424877">
        <id>Q9S7W5</id>
    </interactant>
    <interactant intactId="EBI-2000137">
        <id>Q9MAI5</id>
        <label>ERF8</label>
    </interactant>
    <organismsDiffer>false</organismsDiffer>
    <experiments>5</experiments>
</comment>
<comment type="interaction">
    <interactant intactId="EBI-4424877">
        <id>Q9S7W5</id>
    </interactant>
    <interactant intactId="EBI-4431933">
        <id>Q9FE67</id>
        <label>ERF9</label>
    </interactant>
    <organismsDiffer>false</organismsDiffer>
    <experiments>3</experiments>
</comment>
<comment type="interaction">
    <interactant intactId="EBI-4424877">
        <id>Q9S7W5</id>
    </interactant>
    <interactant intactId="EBI-963606">
        <id>Q9LQT8</id>
        <label>GAI</label>
    </interactant>
    <organismsDiffer>false</organismsDiffer>
    <experiments>4</experiments>
</comment>
<comment type="interaction">
    <interactant intactId="EBI-4424877">
        <id>Q9S7W5</id>
    </interactant>
    <interactant intactId="EBI-4448195">
        <id>P46601</id>
        <label>HAT2</label>
    </interactant>
    <organismsDiffer>false</organismsDiffer>
    <experiments>5</experiments>
</comment>
<comment type="interaction">
    <interactant intactId="EBI-4424877">
        <id>Q9S7W5</id>
    </interactant>
    <interactant intactId="EBI-4428728">
        <id>Q05466</id>
        <label>HAT4</label>
    </interactant>
    <organismsDiffer>false</organismsDiffer>
    <experiments>3</experiments>
</comment>
<comment type="interaction">
    <interactant intactId="EBI-4424877">
        <id>Q9S7W5</id>
    </interactant>
    <interactant intactId="EBI-25524519">
        <id>A0A2H1ZEF6</id>
        <label>IAA15</label>
    </interactant>
    <organismsDiffer>false</organismsDiffer>
    <experiments>3</experiments>
</comment>
<comment type="interaction">
    <interactant intactId="EBI-4424877">
        <id>Q9S7W5</id>
    </interactant>
    <interactant intactId="EBI-632243">
        <id>P93830</id>
        <label>IAA17</label>
    </interactant>
    <organismsDiffer>false</organismsDiffer>
    <experiments>5</experiments>
</comment>
<comment type="interaction">
    <interactant intactId="EBI-4424877">
        <id>Q9S7W5</id>
    </interactant>
    <interactant intactId="EBI-632272">
        <id>O24410</id>
        <label>IAA20</label>
    </interactant>
    <organismsDiffer>false</organismsDiffer>
    <experiments>3</experiments>
</comment>
<comment type="interaction">
    <interactant intactId="EBI-4424877">
        <id>Q9S7W5</id>
    </interactant>
    <interactant intactId="EBI-3946459">
        <id>Q9C5X0</id>
        <label>IAA34</label>
    </interactant>
    <organismsDiffer>false</organismsDiffer>
    <experiments>3</experiments>
</comment>
<comment type="interaction">
    <interactant intactId="EBI-4424877">
        <id>Q9S7W5</id>
    </interactant>
    <interactant intactId="EBI-632216">
        <id>Q38827</id>
        <label>IAA9</label>
    </interactant>
    <organismsDiffer>false</organismsDiffer>
    <experiments>3</experiments>
</comment>
<comment type="interaction">
    <interactant intactId="EBI-4424877">
        <id>Q9S7W5</id>
    </interactant>
    <interactant intactId="EBI-4461713">
        <id>Q8VY64</id>
        <label>NFYA4</label>
    </interactant>
    <organismsDiffer>false</organismsDiffer>
    <experiments>3</experiments>
</comment>
<comment type="interaction">
    <interactant intactId="EBI-4424877">
        <id>Q9S7W5</id>
    </interactant>
    <interactant intactId="EBI-15191571">
        <id>Q4PSE2</id>
        <label>NFYC8</label>
    </interactant>
    <organismsDiffer>false</organismsDiffer>
    <experiments>3</experiments>
</comment>
<comment type="interaction">
    <interactant intactId="EBI-4424877">
        <id>Q9S7W5</id>
    </interactant>
    <interactant intactId="EBI-541107">
        <id>Q9LUA3</id>
        <label>NIMIN-2</label>
    </interactant>
    <organismsDiffer>false</organismsDiffer>
    <experiments>3</experiments>
</comment>
<comment type="interaction">
    <interactant intactId="EBI-4424877">
        <id>Q9S7W5</id>
    </interactant>
    <interactant intactId="EBI-541115">
        <id>Q9FNZ4</id>
        <label>NIMIN-3</label>
    </interactant>
    <organismsDiffer>false</organismsDiffer>
    <experiments>3</experiments>
</comment>
<comment type="interaction">
    <interactant intactId="EBI-4424877">
        <id>Q9S7W5</id>
    </interactant>
    <interactant intactId="EBI-15193025">
        <id>Q9LXU1</id>
        <label>NOT9B</label>
    </interactant>
    <organismsDiffer>false</organismsDiffer>
    <experiments>3</experiments>
</comment>
<comment type="interaction">
    <interactant intactId="EBI-4424877">
        <id>Q9S7W5</id>
    </interactant>
    <interactant intactId="EBI-2363244">
        <id>Q9FJ49</id>
        <label>PYL12</label>
    </interactant>
    <organismsDiffer>false</organismsDiffer>
    <experiments>3</experiments>
</comment>
<comment type="interaction">
    <interactant intactId="EBI-4424877">
        <id>Q9S7W5</id>
    </interactant>
    <interactant intactId="EBI-2363192">
        <id>Q8S8E3</id>
        <label>PYL6</label>
    </interactant>
    <organismsDiffer>false</organismsDiffer>
    <experiments>3</experiments>
</comment>
<comment type="interaction">
    <interactant intactId="EBI-4424877">
        <id>Q9S7W5</id>
    </interactant>
    <interactant intactId="EBI-2349513">
        <id>Q84MC7</id>
        <label>PYL9</label>
    </interactant>
    <organismsDiffer>false</organismsDiffer>
    <experiments>3</experiments>
</comment>
<comment type="interaction">
    <interactant intactId="EBI-4424877">
        <id>Q9S7W5</id>
    </interactant>
    <interactant intactId="EBI-4425094">
        <id>O82239</id>
        <label>RFI2</label>
    </interactant>
    <organismsDiffer>false</organismsDiffer>
    <experiments>3</experiments>
</comment>
<comment type="interaction">
    <interactant intactId="EBI-4424877">
        <id>Q9S7W5</id>
    </interactant>
    <interactant intactId="EBI-963624">
        <id>Q9SLH3</id>
        <label>RGA</label>
    </interactant>
    <organismsDiffer>false</organismsDiffer>
    <experiments>3</experiments>
</comment>
<comment type="interaction">
    <interactant intactId="EBI-4424877">
        <id>Q9S7W5</id>
    </interactant>
    <interactant intactId="EBI-963665">
        <id>Q8GXW1</id>
        <label>RGL2</label>
    </interactant>
    <organismsDiffer>false</organismsDiffer>
    <experiments>3</experiments>
</comment>
<comment type="interaction">
    <interactant intactId="EBI-4424877">
        <id>Q9S7W5</id>
    </interactant>
    <interactant intactId="EBI-15681313">
        <id>Q9LF53</id>
        <label>RGL3</label>
    </interactant>
    <organismsDiffer>false</organismsDiffer>
    <experiments>3</experiments>
</comment>
<comment type="interaction">
    <interactant intactId="EBI-4424877">
        <id>Q9S7W5</id>
    </interactant>
    <interactant intactId="EBI-1113588">
        <id>O81836</id>
        <label>SPL</label>
    </interactant>
    <organismsDiffer>false</organismsDiffer>
    <experiments>3</experiments>
</comment>
<comment type="interaction">
    <interactant intactId="EBI-4424877">
        <id>Q9S7W5</id>
    </interactant>
    <interactant intactId="EBI-15194925">
        <id>Q9LQZ5</id>
        <label>SRS5</label>
    </interactant>
    <organismsDiffer>false</organismsDiffer>
    <experiments>3</experiments>
</comment>
<comment type="interaction">
    <interactant intactId="EBI-4424877">
        <id>Q9S7W5</id>
    </interactant>
    <interactant intactId="EBI-4424563">
        <id>Q93Z00</id>
        <label>TCP14</label>
    </interactant>
    <organismsDiffer>false</organismsDiffer>
    <experiments>6</experiments>
</comment>
<comment type="interaction">
    <interactant intactId="EBI-4424877">
        <id>Q9S7W5</id>
    </interactant>
    <interactant intactId="EBI-4459694">
        <id>Q6X7J9</id>
        <label>WOX4</label>
    </interactant>
    <organismsDiffer>false</organismsDiffer>
    <experiments>3</experiments>
</comment>
<comment type="interaction">
    <interactant intactId="EBI-4424877">
        <id>Q9S7W5</id>
    </interactant>
    <interactant intactId="EBI-1115523">
        <id>Q9LDT3</id>
        <label>YAB4</label>
    </interactant>
    <organismsDiffer>false</organismsDiffer>
    <experiments>3</experiments>
</comment>
<comment type="interaction">
    <interactant intactId="EBI-4424877">
        <id>Q9S7W5</id>
    </interactant>
    <interactant intactId="EBI-4426163">
        <id>Q39266</id>
        <label>ZFP7</label>
    </interactant>
    <organismsDiffer>false</organismsDiffer>
    <experiments>3</experiments>
</comment>
<comment type="interaction">
    <interactant intactId="EBI-4424877">
        <id>Q9S7W5</id>
    </interactant>
    <interactant intactId="EBI-15193377">
        <id>P93751</id>
        <label>ZFP8</label>
    </interactant>
    <organismsDiffer>false</organismsDiffer>
    <experiments>3</experiments>
</comment>
<comment type="subcellular location">
    <subcellularLocation>
        <location evidence="1 3">Nucleus</location>
    </subcellularLocation>
    <subcellularLocation>
        <location evidence="3">Plastid</location>
        <location evidence="3">Chloroplast</location>
    </subcellularLocation>
</comment>
<comment type="alternative products">
    <event type="alternative splicing"/>
    <isoform>
        <id>Q9S7W5-1</id>
        <name>1</name>
        <sequence type="displayed"/>
    </isoform>
    <isoform>
        <id>Q9S7W5-2</id>
        <name>2</name>
        <sequence type="described" ref="VSP_033116"/>
    </isoform>
</comment>
<comment type="tissue specificity">
    <text evidence="3 4">Expressed in cotyledons, particularly in the vascular region, in leaves, buds, flowers and immature siliques, and, to a lower extent, in roots.</text>
</comment>
<comment type="developmental stage">
    <text evidence="6">Expressed during ovule development (PubMed:25378179).</text>
</comment>
<accession>Q9S7W5</accession>
<accession>Q8LEB5</accession>
<protein>
    <recommendedName>
        <fullName>Transcription factor TCP13</fullName>
    </recommendedName>
    <alternativeName>
        <fullName>Plastid transcription factor 1</fullName>
    </alternativeName>
    <alternativeName>
        <fullName>TFPD</fullName>
    </alternativeName>
</protein>
<proteinExistence type="evidence at protein level"/>
<organism>
    <name type="scientific">Arabidopsis thaliana</name>
    <name type="common">Mouse-ear cress</name>
    <dbReference type="NCBI Taxonomy" id="3702"/>
    <lineage>
        <taxon>Eukaryota</taxon>
        <taxon>Viridiplantae</taxon>
        <taxon>Streptophyta</taxon>
        <taxon>Embryophyta</taxon>
        <taxon>Tracheophyta</taxon>
        <taxon>Spermatophyta</taxon>
        <taxon>Magnoliopsida</taxon>
        <taxon>eudicotyledons</taxon>
        <taxon>Gunneridae</taxon>
        <taxon>Pentapetalae</taxon>
        <taxon>rosids</taxon>
        <taxon>malvids</taxon>
        <taxon>Brassicales</taxon>
        <taxon>Brassicaceae</taxon>
        <taxon>Camelineae</taxon>
        <taxon>Arabidopsis</taxon>
    </lineage>
</organism>
<reference key="1">
    <citation type="journal article" date="2001" name="Plant Physiol.">
        <title>Involvement of a nuclear-encoded basic helix-loop-helix protein in transcription of the light-responsive promoter of psbD.</title>
        <authorList>
            <person name="Baba K."/>
            <person name="Nakano T."/>
            <person name="Yamagishi K."/>
            <person name="Yoshida S."/>
        </authorList>
    </citation>
    <scope>NUCLEOTIDE SEQUENCE [MRNA] (ISOFORM 1)</scope>
    <scope>FUNCTION</scope>
    <scope>TISSUE SPECIFICITY</scope>
    <scope>SUBCELLULAR LOCATION</scope>
    <source>
        <strain>cv. Columbia</strain>
    </source>
</reference>
<reference key="2">
    <citation type="journal article" date="2000" name="Nature">
        <title>Sequence and analysis of chromosome 3 of the plant Arabidopsis thaliana.</title>
        <authorList>
            <person name="Salanoubat M."/>
            <person name="Lemcke K."/>
            <person name="Rieger M."/>
            <person name="Ansorge W."/>
            <person name="Unseld M."/>
            <person name="Fartmann B."/>
            <person name="Valle G."/>
            <person name="Bloecker H."/>
            <person name="Perez-Alonso M."/>
            <person name="Obermaier B."/>
            <person name="Delseny M."/>
            <person name="Boutry M."/>
            <person name="Grivell L.A."/>
            <person name="Mache R."/>
            <person name="Puigdomenech P."/>
            <person name="De Simone V."/>
            <person name="Choisne N."/>
            <person name="Artiguenave F."/>
            <person name="Robert C."/>
            <person name="Brottier P."/>
            <person name="Wincker P."/>
            <person name="Cattolico L."/>
            <person name="Weissenbach J."/>
            <person name="Saurin W."/>
            <person name="Quetier F."/>
            <person name="Schaefer M."/>
            <person name="Mueller-Auer S."/>
            <person name="Gabel C."/>
            <person name="Fuchs M."/>
            <person name="Benes V."/>
            <person name="Wurmbach E."/>
            <person name="Drzonek H."/>
            <person name="Erfle H."/>
            <person name="Jordan N."/>
            <person name="Bangert S."/>
            <person name="Wiedelmann R."/>
            <person name="Kranz H."/>
            <person name="Voss H."/>
            <person name="Holland R."/>
            <person name="Brandt P."/>
            <person name="Nyakatura G."/>
            <person name="Vezzi A."/>
            <person name="D'Angelo M."/>
            <person name="Pallavicini A."/>
            <person name="Toppo S."/>
            <person name="Simionati B."/>
            <person name="Conrad A."/>
            <person name="Hornischer K."/>
            <person name="Kauer G."/>
            <person name="Loehnert T.-H."/>
            <person name="Nordsiek G."/>
            <person name="Reichelt J."/>
            <person name="Scharfe M."/>
            <person name="Schoen O."/>
            <person name="Bargues M."/>
            <person name="Terol J."/>
            <person name="Climent J."/>
            <person name="Navarro P."/>
            <person name="Collado C."/>
            <person name="Perez-Perez A."/>
            <person name="Ottenwaelder B."/>
            <person name="Duchemin D."/>
            <person name="Cooke R."/>
            <person name="Laudie M."/>
            <person name="Berger-Llauro C."/>
            <person name="Purnelle B."/>
            <person name="Masuy D."/>
            <person name="de Haan M."/>
            <person name="Maarse A.C."/>
            <person name="Alcaraz J.-P."/>
            <person name="Cottet A."/>
            <person name="Casacuberta E."/>
            <person name="Monfort A."/>
            <person name="Argiriou A."/>
            <person name="Flores M."/>
            <person name="Liguori R."/>
            <person name="Vitale D."/>
            <person name="Mannhaupt G."/>
            <person name="Haase D."/>
            <person name="Schoof H."/>
            <person name="Rudd S."/>
            <person name="Zaccaria P."/>
            <person name="Mewes H.-W."/>
            <person name="Mayer K.F.X."/>
            <person name="Kaul S."/>
            <person name="Town C.D."/>
            <person name="Koo H.L."/>
            <person name="Tallon L.J."/>
            <person name="Jenkins J."/>
            <person name="Rooney T."/>
            <person name="Rizzo M."/>
            <person name="Walts A."/>
            <person name="Utterback T."/>
            <person name="Fujii C.Y."/>
            <person name="Shea T.P."/>
            <person name="Creasy T.H."/>
            <person name="Haas B."/>
            <person name="Maiti R."/>
            <person name="Wu D."/>
            <person name="Peterson J."/>
            <person name="Van Aken S."/>
            <person name="Pai G."/>
            <person name="Militscher J."/>
            <person name="Sellers P."/>
            <person name="Gill J.E."/>
            <person name="Feldblyum T.V."/>
            <person name="Preuss D."/>
            <person name="Lin X."/>
            <person name="Nierman W.C."/>
            <person name="Salzberg S.L."/>
            <person name="White O."/>
            <person name="Venter J.C."/>
            <person name="Fraser C.M."/>
            <person name="Kaneko T."/>
            <person name="Nakamura Y."/>
            <person name="Sato S."/>
            <person name="Kato T."/>
            <person name="Asamizu E."/>
            <person name="Sasamoto S."/>
            <person name="Kimura T."/>
            <person name="Idesawa K."/>
            <person name="Kawashima K."/>
            <person name="Kishida Y."/>
            <person name="Kiyokawa C."/>
            <person name="Kohara M."/>
            <person name="Matsumoto M."/>
            <person name="Matsuno A."/>
            <person name="Muraki A."/>
            <person name="Nakayama S."/>
            <person name="Nakazaki N."/>
            <person name="Shinpo S."/>
            <person name="Takeuchi C."/>
            <person name="Wada T."/>
            <person name="Watanabe A."/>
            <person name="Yamada M."/>
            <person name="Yasuda M."/>
            <person name="Tabata S."/>
        </authorList>
    </citation>
    <scope>NUCLEOTIDE SEQUENCE [LARGE SCALE GENOMIC DNA]</scope>
    <source>
        <strain>cv. Columbia</strain>
    </source>
</reference>
<reference key="3">
    <citation type="journal article" date="2017" name="Plant J.">
        <title>Araport11: a complete reannotation of the Arabidopsis thaliana reference genome.</title>
        <authorList>
            <person name="Cheng C.Y."/>
            <person name="Krishnakumar V."/>
            <person name="Chan A.P."/>
            <person name="Thibaud-Nissen F."/>
            <person name="Schobel S."/>
            <person name="Town C.D."/>
        </authorList>
    </citation>
    <scope>GENOME REANNOTATION</scope>
    <source>
        <strain>cv. Columbia</strain>
    </source>
</reference>
<reference key="4">
    <citation type="journal article" date="2003" name="Science">
        <title>Empirical analysis of transcriptional activity in the Arabidopsis genome.</title>
        <authorList>
            <person name="Yamada K."/>
            <person name="Lim J."/>
            <person name="Dale J.M."/>
            <person name="Chen H."/>
            <person name="Shinn P."/>
            <person name="Palm C.J."/>
            <person name="Southwick A.M."/>
            <person name="Wu H.C."/>
            <person name="Kim C.J."/>
            <person name="Nguyen M."/>
            <person name="Pham P.K."/>
            <person name="Cheuk R.F."/>
            <person name="Karlin-Newmann G."/>
            <person name="Liu S.X."/>
            <person name="Lam B."/>
            <person name="Sakano H."/>
            <person name="Wu T."/>
            <person name="Yu G."/>
            <person name="Miranda M."/>
            <person name="Quach H.L."/>
            <person name="Tripp M."/>
            <person name="Chang C.H."/>
            <person name="Lee J.M."/>
            <person name="Toriumi M.J."/>
            <person name="Chan M.M."/>
            <person name="Tang C.C."/>
            <person name="Onodera C.S."/>
            <person name="Deng J.M."/>
            <person name="Akiyama K."/>
            <person name="Ansari Y."/>
            <person name="Arakawa T."/>
            <person name="Banh J."/>
            <person name="Banno F."/>
            <person name="Bowser L."/>
            <person name="Brooks S.Y."/>
            <person name="Carninci P."/>
            <person name="Chao Q."/>
            <person name="Choy N."/>
            <person name="Enju A."/>
            <person name="Goldsmith A.D."/>
            <person name="Gurjal M."/>
            <person name="Hansen N.F."/>
            <person name="Hayashizaki Y."/>
            <person name="Johnson-Hopson C."/>
            <person name="Hsuan V.W."/>
            <person name="Iida K."/>
            <person name="Karnes M."/>
            <person name="Khan S."/>
            <person name="Koesema E."/>
            <person name="Ishida J."/>
            <person name="Jiang P.X."/>
            <person name="Jones T."/>
            <person name="Kawai J."/>
            <person name="Kamiya A."/>
            <person name="Meyers C."/>
            <person name="Nakajima M."/>
            <person name="Narusaka M."/>
            <person name="Seki M."/>
            <person name="Sakurai T."/>
            <person name="Satou M."/>
            <person name="Tamse R."/>
            <person name="Vaysberg M."/>
            <person name="Wallender E.K."/>
            <person name="Wong C."/>
            <person name="Yamamura Y."/>
            <person name="Yuan S."/>
            <person name="Shinozaki K."/>
            <person name="Davis R.W."/>
            <person name="Theologis A."/>
            <person name="Ecker J.R."/>
        </authorList>
    </citation>
    <scope>NUCLEOTIDE SEQUENCE [LARGE SCALE MRNA] (ISOFORM 1)</scope>
    <source>
        <strain>cv. Columbia</strain>
    </source>
</reference>
<reference key="5">
    <citation type="submission" date="2002-03" db="EMBL/GenBank/DDBJ databases">
        <title>Full-length cDNA from Arabidopsis thaliana.</title>
        <authorList>
            <person name="Brover V.V."/>
            <person name="Troukhan M.E."/>
            <person name="Alexandrov N.A."/>
            <person name="Lu Y.-P."/>
            <person name="Flavell R.B."/>
            <person name="Feldmann K.A."/>
        </authorList>
    </citation>
    <scope>NUCLEOTIDE SEQUENCE [LARGE SCALE MRNA] (ISOFORM 2)</scope>
</reference>
<reference key="6">
    <citation type="journal article" date="2007" name="Plant Cell">
        <title>Arabidopsis BRANCHED1 acts as an integrator of branching signals within axillary buds.</title>
        <authorList>
            <person name="Aguilar-Martinez J.A."/>
            <person name="Poza-Carrion C."/>
            <person name="Cubas P."/>
        </authorList>
    </citation>
    <scope>GENE FAMILY</scope>
    <scope>NOMENCLATURE</scope>
</reference>
<reference key="7">
    <citation type="journal article" date="2007" name="Plant Cell">
        <title>TCP transcription factors control the morphology of shoot lateral organs via negative regulation of the expression of boundary-specific genes in Arabidopsis.</title>
        <authorList>
            <person name="Koyama T."/>
            <person name="Furutani M."/>
            <person name="Tasaka M."/>
            <person name="Ohme-Takagi M."/>
        </authorList>
    </citation>
    <scope>FUNCTION</scope>
    <scope>TISSUE SPECIFICITY</scope>
</reference>
<reference key="8">
    <citation type="journal article" date="2013" name="Proc. Natl. Acad. Sci. U.S.A.">
        <title>Arabidopsis thaliana AHL family modulates hypocotyl growth redundantly by interacting with each other via the PPC/DUF296 domain.</title>
        <authorList>
            <person name="Zhao J."/>
            <person name="Favero D.S."/>
            <person name="Peng H."/>
            <person name="Neff M.M."/>
        </authorList>
    </citation>
    <scope>INTERACTION WITH AHL27 AND AHL29</scope>
</reference>
<reference key="9">
    <citation type="journal article" date="2014" name="J. Genet. Genomics">
        <title>SPOROCYTELESS is a novel embryophyte-specific transcription repressor that interacts with TPL and TCP proteins in Arabidopsis.</title>
        <authorList>
            <person name="Chen G.H."/>
            <person name="Sun J.Y."/>
            <person name="Liu M."/>
            <person name="Liu J."/>
            <person name="Yang W.C."/>
        </authorList>
    </citation>
    <scope>INTERACTION WITH SPL</scope>
</reference>
<reference key="10">
    <citation type="journal article" date="2015" name="Cell Res.">
        <title>The molecular mechanism of sporocyteless/nozzle in controlling Arabidopsis ovule development.</title>
        <authorList>
            <person name="Wei B."/>
            <person name="Zhang J."/>
            <person name="Pang C."/>
            <person name="Yu H."/>
            <person name="Guo D."/>
            <person name="Jiang H."/>
            <person name="Ding M."/>
            <person name="Chen Z."/>
            <person name="Tao Q."/>
            <person name="Gu H."/>
            <person name="Qu L.J."/>
            <person name="Qin G."/>
        </authorList>
    </citation>
    <scope>FUNCTION</scope>
    <scope>INTERACTION WITH SPL</scope>
    <scope>DEVELOPMENTAL STAGE</scope>
</reference>
<reference key="11">
    <citation type="journal article" date="2016" name="Curr. Plant Biol.">
        <title>A protein-protein interaction network linking the energy-sensor kinase SnRK1 to multiple signaling pathways in Arabidopsis thaliana.</title>
        <authorList>
            <person name="Nietzsche M."/>
            <person name="Landgraf R."/>
            <person name="Tohge T."/>
            <person name="Boernke F."/>
        </authorList>
    </citation>
    <scope>INTERACTION WITH KIN10; KIN11 AND FLZ3</scope>
</reference>
<keyword id="KW-0025">Alternative splicing</keyword>
<keyword id="KW-0150">Chloroplast</keyword>
<keyword id="KW-0217">Developmental protein</keyword>
<keyword id="KW-0238">DNA-binding</keyword>
<keyword id="KW-0539">Nucleus</keyword>
<keyword id="KW-0934">Plastid</keyword>
<keyword id="KW-1185">Reference proteome</keyword>
<keyword id="KW-0804">Transcription</keyword>
<keyword id="KW-0805">Transcription regulation</keyword>
<feature type="chain" id="PRO_0000330787" description="Transcription factor TCP13">
    <location>
        <begin position="1"/>
        <end position="355"/>
    </location>
</feature>
<feature type="domain" description="TCP" evidence="1">
    <location>
        <begin position="74"/>
        <end position="132"/>
    </location>
</feature>
<feature type="region of interest" description="Disordered" evidence="2">
    <location>
        <begin position="1"/>
        <end position="57"/>
    </location>
</feature>
<feature type="region of interest" description="Disordered" evidence="2">
    <location>
        <begin position="329"/>
        <end position="355"/>
    </location>
</feature>
<feature type="compositionally biased region" description="Basic and acidic residues" evidence="2">
    <location>
        <begin position="341"/>
        <end position="355"/>
    </location>
</feature>
<feature type="splice variant" id="VSP_033116" description="In isoform 2." evidence="9">
    <location>
        <begin position="279"/>
        <end position="355"/>
    </location>
</feature>